<protein>
    <recommendedName>
        <fullName evidence="1">Small ribosomal subunit protein bS21</fullName>
    </recommendedName>
    <alternativeName>
        <fullName evidence="2">30S ribosomal protein S21</fullName>
    </alternativeName>
</protein>
<evidence type="ECO:0000255" key="1">
    <source>
        <dbReference type="HAMAP-Rule" id="MF_00358"/>
    </source>
</evidence>
<evidence type="ECO:0000305" key="2"/>
<accession>Q49Y18</accession>
<feature type="chain" id="PRO_0000266775" description="Small ribosomal subunit protein bS21">
    <location>
        <begin position="1"/>
        <end position="58"/>
    </location>
</feature>
<keyword id="KW-1185">Reference proteome</keyword>
<keyword id="KW-0687">Ribonucleoprotein</keyword>
<keyword id="KW-0689">Ribosomal protein</keyword>
<name>RS21_STAS1</name>
<proteinExistence type="inferred from homology"/>
<comment type="similarity">
    <text evidence="1">Belongs to the bacterial ribosomal protein bS21 family.</text>
</comment>
<sequence length="58" mass="6958">MSKTVVKKNESLEDALRRFKRTVSKSGTIQEVRKREFYEKPSVKRKKKSEAARKRKFK</sequence>
<gene>
    <name evidence="1" type="primary">rpsU</name>
    <name type="ordered locus">SSP1181</name>
</gene>
<reference key="1">
    <citation type="journal article" date="2005" name="Proc. Natl. Acad. Sci. U.S.A.">
        <title>Whole genome sequence of Staphylococcus saprophyticus reveals the pathogenesis of uncomplicated urinary tract infection.</title>
        <authorList>
            <person name="Kuroda M."/>
            <person name="Yamashita A."/>
            <person name="Hirakawa H."/>
            <person name="Kumano M."/>
            <person name="Morikawa K."/>
            <person name="Higashide M."/>
            <person name="Maruyama A."/>
            <person name="Inose Y."/>
            <person name="Matoba K."/>
            <person name="Toh H."/>
            <person name="Kuhara S."/>
            <person name="Hattori M."/>
            <person name="Ohta T."/>
        </authorList>
    </citation>
    <scope>NUCLEOTIDE SEQUENCE [LARGE SCALE GENOMIC DNA]</scope>
    <source>
        <strain>ATCC 15305 / DSM 20229 / NCIMB 8711 / NCTC 7292 / S-41</strain>
    </source>
</reference>
<organism>
    <name type="scientific">Staphylococcus saprophyticus subsp. saprophyticus (strain ATCC 15305 / DSM 20229 / NCIMB 8711 / NCTC 7292 / S-41)</name>
    <dbReference type="NCBI Taxonomy" id="342451"/>
    <lineage>
        <taxon>Bacteria</taxon>
        <taxon>Bacillati</taxon>
        <taxon>Bacillota</taxon>
        <taxon>Bacilli</taxon>
        <taxon>Bacillales</taxon>
        <taxon>Staphylococcaceae</taxon>
        <taxon>Staphylococcus</taxon>
    </lineage>
</organism>
<dbReference type="EMBL" id="AP008934">
    <property type="protein sequence ID" value="BAE18326.1"/>
    <property type="molecule type" value="Genomic_DNA"/>
</dbReference>
<dbReference type="RefSeq" id="WP_002483157.1">
    <property type="nucleotide sequence ID" value="NZ_MTGA01000038.1"/>
</dbReference>
<dbReference type="SMR" id="Q49Y18"/>
<dbReference type="DNASU" id="3616928"/>
<dbReference type="GeneID" id="97227949"/>
<dbReference type="KEGG" id="ssp:SSP1181"/>
<dbReference type="eggNOG" id="COG0828">
    <property type="taxonomic scope" value="Bacteria"/>
</dbReference>
<dbReference type="HOGENOM" id="CLU_159258_3_2_9"/>
<dbReference type="OrthoDB" id="9799244at2"/>
<dbReference type="Proteomes" id="UP000006371">
    <property type="component" value="Chromosome"/>
</dbReference>
<dbReference type="GO" id="GO:1990904">
    <property type="term" value="C:ribonucleoprotein complex"/>
    <property type="evidence" value="ECO:0007669"/>
    <property type="project" value="UniProtKB-KW"/>
</dbReference>
<dbReference type="GO" id="GO:0005840">
    <property type="term" value="C:ribosome"/>
    <property type="evidence" value="ECO:0007669"/>
    <property type="project" value="UniProtKB-KW"/>
</dbReference>
<dbReference type="GO" id="GO:0003735">
    <property type="term" value="F:structural constituent of ribosome"/>
    <property type="evidence" value="ECO:0007669"/>
    <property type="project" value="InterPro"/>
</dbReference>
<dbReference type="GO" id="GO:0006412">
    <property type="term" value="P:translation"/>
    <property type="evidence" value="ECO:0007669"/>
    <property type="project" value="UniProtKB-UniRule"/>
</dbReference>
<dbReference type="Gene3D" id="1.20.5.1150">
    <property type="entry name" value="Ribosomal protein S8"/>
    <property type="match status" value="1"/>
</dbReference>
<dbReference type="HAMAP" id="MF_00358">
    <property type="entry name" value="Ribosomal_bS21"/>
    <property type="match status" value="1"/>
</dbReference>
<dbReference type="InterPro" id="IPR001911">
    <property type="entry name" value="Ribosomal_bS21"/>
</dbReference>
<dbReference type="InterPro" id="IPR018278">
    <property type="entry name" value="Ribosomal_bS21_CS"/>
</dbReference>
<dbReference type="InterPro" id="IPR038380">
    <property type="entry name" value="Ribosomal_bS21_sf"/>
</dbReference>
<dbReference type="NCBIfam" id="TIGR00030">
    <property type="entry name" value="S21p"/>
    <property type="match status" value="1"/>
</dbReference>
<dbReference type="PANTHER" id="PTHR21109">
    <property type="entry name" value="MITOCHONDRIAL 28S RIBOSOMAL PROTEIN S21"/>
    <property type="match status" value="1"/>
</dbReference>
<dbReference type="PANTHER" id="PTHR21109:SF22">
    <property type="entry name" value="SMALL RIBOSOMAL SUBUNIT PROTEIN BS21"/>
    <property type="match status" value="1"/>
</dbReference>
<dbReference type="Pfam" id="PF01165">
    <property type="entry name" value="Ribosomal_S21"/>
    <property type="match status" value="1"/>
</dbReference>
<dbReference type="PRINTS" id="PR00976">
    <property type="entry name" value="RIBOSOMALS21"/>
</dbReference>
<dbReference type="PROSITE" id="PS01181">
    <property type="entry name" value="RIBOSOMAL_S21"/>
    <property type="match status" value="1"/>
</dbReference>